<sequence length="832" mass="91982">MADPAAESIDASSSRFGRVVCYNQTAMHGSNTISAAAPFFMTQLSVANLTYRILYYFLKPLCLPPFVAQILCGLLFSPTVLGNNEVVLKLIFPYKYTMLLETFANLALVYNVFLLGLGLDLRMIKIKDIKPVIIAIVGLLAALLAGAGLYYLPSNGEADKILAGCMYWSIAFGCTNFPDLARILADLKLLRTDMGHTAMCAAVVTDLCTWILFIFGMAIFSKSGVRNEMLPYSLASTIAFVLLCYFVIQPGVAWIFNNTVEGGQVGDTHVWYTLAGVIICSLITEVCGVHSITGAFLFGLSIPHDHIIRKMIEEKLHDFLSGMLMPLFYIICGLRADIGYMNRTVSVGMMAVVTSASVMVKILSTMFCSIFLRIPLRDGLAIGALMNTKGTMALVILNAGRDTKALDVIMYTHLTLAFLVMSMVVQPLLAIAYKPKKKLIFYKNRTIQKHKGESELCVLTCVHVLPNVSGITNLLQLSNPTKKSPLNVFAIHLVELTGRTTASLLIMNDEAKPKANFADRVRAESDQIAEMFTALEVNNDGVMVQTITAVSPYATMDEDICLLAEDKQACFILLPYHKNMTSDGRLNEGNAVHAEINQNVMSHAPCSVGILVDRGMTTVRFESFMFQGETTKKEIAMLFLGGRDDREALAYAWRMVGQEMVQLTVVRFVPSQEALVSAGEAADEYEKDKHVDEESIYEFNFKTMNDPSVTYVEKVVKNGQETITAILELEDNNSYDLYIVGRGYQVETPVTSGLTDWNSTPDLGIIGDTLISSNFTMQASVLVVQQYSSANRQTAENNNQEPVQGKAKTDHEATPFMEDEDDEVEHQYSMRR</sequence>
<accession>Q9SKA9</accession>
<proteinExistence type="evidence at transcript level"/>
<dbReference type="EMBL" id="AC006533">
    <property type="protein sequence ID" value="AAD32281.1"/>
    <property type="status" value="ALT_SEQ"/>
    <property type="molecule type" value="Genomic_DNA"/>
</dbReference>
<dbReference type="EMBL" id="CP002685">
    <property type="protein sequence ID" value="AEC08602.1"/>
    <property type="molecule type" value="Genomic_DNA"/>
</dbReference>
<dbReference type="PIR" id="F84726">
    <property type="entry name" value="F84726"/>
</dbReference>
<dbReference type="RefSeq" id="NP_001324588.1">
    <property type="nucleotide sequence ID" value="NM_001336356.1"/>
</dbReference>
<dbReference type="RefSeq" id="NP_001324589.1">
    <property type="nucleotide sequence ID" value="NM_001336355.1"/>
</dbReference>
<dbReference type="RefSeq" id="NP_180750.2">
    <property type="nucleotide sequence ID" value="NM_128749.2"/>
</dbReference>
<dbReference type="SMR" id="Q9SKA9"/>
<dbReference type="FunCoup" id="Q9SKA9">
    <property type="interactions" value="3"/>
</dbReference>
<dbReference type="STRING" id="3702.Q9SKA9"/>
<dbReference type="PaxDb" id="3702-AT2G31910.1"/>
<dbReference type="EnsemblPlants" id="AT2G31910.1">
    <property type="protein sequence ID" value="AT2G31910.1"/>
    <property type="gene ID" value="AT2G31910"/>
</dbReference>
<dbReference type="GeneID" id="817749"/>
<dbReference type="Gramene" id="AT2G31910.1">
    <property type="protein sequence ID" value="AT2G31910.1"/>
    <property type="gene ID" value="AT2G31910"/>
</dbReference>
<dbReference type="KEGG" id="ath:AT2G31910"/>
<dbReference type="Araport" id="AT2G31910"/>
<dbReference type="TAIR" id="AT2G31910">
    <property type="gene designation" value="CHX21"/>
</dbReference>
<dbReference type="eggNOG" id="KOG1650">
    <property type="taxonomic scope" value="Eukaryota"/>
</dbReference>
<dbReference type="HOGENOM" id="CLU_005126_6_2_1"/>
<dbReference type="InParanoid" id="Q9SKA9"/>
<dbReference type="OMA" id="IHEMADC"/>
<dbReference type="PhylomeDB" id="Q9SKA9"/>
<dbReference type="PRO" id="PR:Q9SKA9"/>
<dbReference type="Proteomes" id="UP000006548">
    <property type="component" value="Chromosome 2"/>
</dbReference>
<dbReference type="ExpressionAtlas" id="Q9SKA9">
    <property type="expression patterns" value="baseline and differential"/>
</dbReference>
<dbReference type="GO" id="GO:0005886">
    <property type="term" value="C:plasma membrane"/>
    <property type="evidence" value="ECO:0007669"/>
    <property type="project" value="UniProtKB-SubCell"/>
</dbReference>
<dbReference type="GO" id="GO:0015297">
    <property type="term" value="F:antiporter activity"/>
    <property type="evidence" value="ECO:0007669"/>
    <property type="project" value="UniProtKB-KW"/>
</dbReference>
<dbReference type="GO" id="GO:0010183">
    <property type="term" value="P:pollen tube guidance"/>
    <property type="evidence" value="ECO:0000316"/>
    <property type="project" value="TAIR"/>
</dbReference>
<dbReference type="GO" id="GO:0006813">
    <property type="term" value="P:potassium ion transport"/>
    <property type="evidence" value="ECO:0007669"/>
    <property type="project" value="UniProtKB-KW"/>
</dbReference>
<dbReference type="GO" id="GO:1902600">
    <property type="term" value="P:proton transmembrane transport"/>
    <property type="evidence" value="ECO:0007669"/>
    <property type="project" value="InterPro"/>
</dbReference>
<dbReference type="Gene3D" id="1.20.1530.20">
    <property type="match status" value="1"/>
</dbReference>
<dbReference type="Gene3D" id="3.40.50.12370">
    <property type="match status" value="1"/>
</dbReference>
<dbReference type="InterPro" id="IPR006153">
    <property type="entry name" value="Cation/H_exchanger_TM"/>
</dbReference>
<dbReference type="InterPro" id="IPR050794">
    <property type="entry name" value="CPA2_transporter"/>
</dbReference>
<dbReference type="InterPro" id="IPR038770">
    <property type="entry name" value="Na+/solute_symporter_sf"/>
</dbReference>
<dbReference type="PANTHER" id="PTHR32468">
    <property type="entry name" value="CATION/H + ANTIPORTER"/>
    <property type="match status" value="1"/>
</dbReference>
<dbReference type="PANTHER" id="PTHR32468:SF74">
    <property type="entry name" value="CATION_H(+) ANTIPORTER 21-RELATED"/>
    <property type="match status" value="1"/>
</dbReference>
<dbReference type="Pfam" id="PF23256">
    <property type="entry name" value="CHX17_2nd"/>
    <property type="match status" value="1"/>
</dbReference>
<dbReference type="Pfam" id="PF23259">
    <property type="entry name" value="CHX17_C"/>
    <property type="match status" value="1"/>
</dbReference>
<dbReference type="Pfam" id="PF00999">
    <property type="entry name" value="Na_H_Exchanger"/>
    <property type="match status" value="1"/>
</dbReference>
<protein>
    <recommendedName>
        <fullName>Cation/H(+) antiporter 21</fullName>
    </recommendedName>
    <alternativeName>
        <fullName>Protein CATION/H+ EXCHANGER 21</fullName>
        <shortName>AtCHX21</shortName>
    </alternativeName>
</protein>
<name>CHX21_ARATH</name>
<gene>
    <name type="primary">CHX21</name>
    <name type="ordered locus">At2g31910</name>
    <name type="ORF">F20M17.5</name>
</gene>
<organism>
    <name type="scientific">Arabidopsis thaliana</name>
    <name type="common">Mouse-ear cress</name>
    <dbReference type="NCBI Taxonomy" id="3702"/>
    <lineage>
        <taxon>Eukaryota</taxon>
        <taxon>Viridiplantae</taxon>
        <taxon>Streptophyta</taxon>
        <taxon>Embryophyta</taxon>
        <taxon>Tracheophyta</taxon>
        <taxon>Spermatophyta</taxon>
        <taxon>Magnoliopsida</taxon>
        <taxon>eudicotyledons</taxon>
        <taxon>Gunneridae</taxon>
        <taxon>Pentapetalae</taxon>
        <taxon>rosids</taxon>
        <taxon>malvids</taxon>
        <taxon>Brassicales</taxon>
        <taxon>Brassicaceae</taxon>
        <taxon>Camelineae</taxon>
        <taxon>Arabidopsis</taxon>
    </lineage>
</organism>
<keyword id="KW-0050">Antiport</keyword>
<keyword id="KW-1003">Cell membrane</keyword>
<keyword id="KW-0406">Ion transport</keyword>
<keyword id="KW-0472">Membrane</keyword>
<keyword id="KW-0630">Potassium</keyword>
<keyword id="KW-0633">Potassium transport</keyword>
<keyword id="KW-1185">Reference proteome</keyword>
<keyword id="KW-0812">Transmembrane</keyword>
<keyword id="KW-1133">Transmembrane helix</keyword>
<keyword id="KW-0813">Transport</keyword>
<reference key="1">
    <citation type="journal article" date="1999" name="Nature">
        <title>Sequence and analysis of chromosome 2 of the plant Arabidopsis thaliana.</title>
        <authorList>
            <person name="Lin X."/>
            <person name="Kaul S."/>
            <person name="Rounsley S.D."/>
            <person name="Shea T.P."/>
            <person name="Benito M.-I."/>
            <person name="Town C.D."/>
            <person name="Fujii C.Y."/>
            <person name="Mason T.M."/>
            <person name="Bowman C.L."/>
            <person name="Barnstead M.E."/>
            <person name="Feldblyum T.V."/>
            <person name="Buell C.R."/>
            <person name="Ketchum K.A."/>
            <person name="Lee J.J."/>
            <person name="Ronning C.M."/>
            <person name="Koo H.L."/>
            <person name="Moffat K.S."/>
            <person name="Cronin L.A."/>
            <person name="Shen M."/>
            <person name="Pai G."/>
            <person name="Van Aken S."/>
            <person name="Umayam L."/>
            <person name="Tallon L.J."/>
            <person name="Gill J.E."/>
            <person name="Adams M.D."/>
            <person name="Carrera A.J."/>
            <person name="Creasy T.H."/>
            <person name="Goodman H.M."/>
            <person name="Somerville C.R."/>
            <person name="Copenhaver G.P."/>
            <person name="Preuss D."/>
            <person name="Nierman W.C."/>
            <person name="White O."/>
            <person name="Eisen J.A."/>
            <person name="Salzberg S.L."/>
            <person name="Fraser C.M."/>
            <person name="Venter J.C."/>
        </authorList>
    </citation>
    <scope>NUCLEOTIDE SEQUENCE [LARGE SCALE GENOMIC DNA]</scope>
    <source>
        <strain>cv. Columbia</strain>
    </source>
</reference>
<reference key="2">
    <citation type="journal article" date="2017" name="Plant J.">
        <title>Araport11: a complete reannotation of the Arabidopsis thaliana reference genome.</title>
        <authorList>
            <person name="Cheng C.Y."/>
            <person name="Krishnakumar V."/>
            <person name="Chan A.P."/>
            <person name="Thibaud-Nissen F."/>
            <person name="Schobel S."/>
            <person name="Town C.D."/>
        </authorList>
    </citation>
    <scope>GENOME REANNOTATION</scope>
    <source>
        <strain>cv. Columbia</strain>
    </source>
</reference>
<reference key="3">
    <citation type="journal article" date="2001" name="Plant Physiol.">
        <title>Phylogenetic relationships within cation transporter families of Arabidopsis.</title>
        <authorList>
            <person name="Maeser P."/>
            <person name="Thomine S."/>
            <person name="Schroeder J.I."/>
            <person name="Ward J.M."/>
            <person name="Hirschi K."/>
            <person name="Sze H."/>
            <person name="Talke I.N."/>
            <person name="Amtmann A."/>
            <person name="Maathuis F.J.M."/>
            <person name="Sanders D."/>
            <person name="Harper J.F."/>
            <person name="Tchieu J."/>
            <person name="Gribskov M."/>
            <person name="Persans M.W."/>
            <person name="Salt D.E."/>
            <person name="Kim S.A."/>
            <person name="Guerinot M.L."/>
        </authorList>
    </citation>
    <scope>GENE FAMILY</scope>
    <scope>NOMENCLATURE</scope>
</reference>
<reference key="4">
    <citation type="journal article" date="2004" name="Plant Physiol.">
        <title>Expression patterns of a novel AtCHX gene family highlight potential roles in osmotic adjustment and K+ homeostasis in pollen development.</title>
        <authorList>
            <person name="Sze H."/>
            <person name="Padmanaban S."/>
            <person name="Cellier F."/>
            <person name="Honys D."/>
            <person name="Cheng N.-H."/>
            <person name="Bock K.W."/>
            <person name="Conejero G."/>
            <person name="Li X."/>
            <person name="Twell D."/>
            <person name="Ward J.M."/>
            <person name="Hirschi K.D."/>
        </authorList>
    </citation>
    <scope>GENE FAMILY</scope>
    <scope>NOMENCLATURE</scope>
</reference>
<reference key="5">
    <citation type="journal article" date="2006" name="J. Exp. Bot.">
        <title>Functional analysis of CHX21: a putative sodium transporter in Arabidopsis.</title>
        <authorList>
            <person name="Hall D."/>
            <person name="Evans A.R."/>
            <person name="Newbury H.J."/>
            <person name="Pritchard J."/>
        </authorList>
    </citation>
    <scope>FUNCTION</scope>
    <scope>DISRUPTION PHENOTYPE</scope>
    <scope>SUBCELLULAR LOCATION</scope>
    <scope>TISSUE SPECIFICITY</scope>
</reference>
<reference key="6">
    <citation type="journal article" date="2011" name="Plant Cell">
        <title>Pollen tubes lacking a pair of K+ transporters fail to target ovules in Arabidopsis.</title>
        <authorList>
            <person name="Lu Y."/>
            <person name="Chanroj S."/>
            <person name="Zulkifli L."/>
            <person name="Johnson M.A."/>
            <person name="Uozumi N."/>
            <person name="Cheung A."/>
            <person name="Sze H."/>
        </authorList>
    </citation>
    <scope>FUNCTION</scope>
    <scope>TISSUE SPECIFICITY</scope>
    <scope>DISRUPTION PHENOTYPE</scope>
    <source>
        <strain>cv. Columbia</strain>
    </source>
</reference>
<reference key="7">
    <citation type="journal article" date="2012" name="J. Exp. Bot.">
        <title>The roles of the cation transporters CHX21 and CHX23 in the development of Arabidopsis thaliana.</title>
        <authorList>
            <person name="Evans A.R."/>
            <person name="Hall D."/>
            <person name="Pritchard J."/>
            <person name="Newbury H.J."/>
        </authorList>
    </citation>
    <scope>RETRACTED PAPER</scope>
</reference>
<reference key="8">
    <citation type="journal article" date="2021" name="J. Exp. Bot.">
        <authorList>
            <person name="Evans A.R."/>
            <person name="Hall D."/>
            <person name="Pritchard J."/>
            <person name="Newbury H.J."/>
        </authorList>
    </citation>
    <scope>RETRACTION NOTICE OF PUBMED:21976771</scope>
</reference>
<comment type="function">
    <text evidence="3 4">Operates as a Na(+)/H(+) antiporter that plays a role in regulation of xylem Na(+) concentration and, consequently, Na(+) accumulation in the leaf. Required for pollen tube guidance, but not for normal pollen development. May also be involved in the development or function of the female gametophyte.</text>
</comment>
<comment type="subcellular location">
    <subcellularLocation>
        <location evidence="3">Cell membrane</location>
        <topology evidence="3">Multi-pass membrane protein</topology>
    </subcellularLocation>
</comment>
<comment type="tissue specificity">
    <text evidence="3 4">Specifically expressed in root endodermal cells (PubMed:16513816). Expressed in seedlings, roots, leaves, flowers, flower buds and pollen.</text>
</comment>
<comment type="disruption phenotype">
    <text evidence="3 4">Mutants display a reduced rosette width, a later flowering time and an altered leaf K(+) and Na(+) contents (PubMed:16513816). No defect in male fertility, due to redundancy with CHX23. Chx21 and chx23 double mutants are male sterile (PubMed:21239645).</text>
</comment>
<comment type="similarity">
    <text evidence="5">Belongs to the monovalent cation:proton antiporter 2 (CPA2) transporter (TC 2.A.37) family. CHX (TC 2.A.37.4) subfamily.</text>
</comment>
<comment type="caution">
    <text evidence="6">The article by Evans et al was retracted by the editors due to concerns over image manipulation, which raised sufficient doubts regarding the credibility of the study.</text>
</comment>
<comment type="sequence caution" evidence="5">
    <conflict type="erroneous gene model prediction">
        <sequence resource="EMBL-CDS" id="AAD32281"/>
    </conflict>
</comment>
<evidence type="ECO:0000255" key="1"/>
<evidence type="ECO:0000256" key="2">
    <source>
        <dbReference type="SAM" id="MobiDB-lite"/>
    </source>
</evidence>
<evidence type="ECO:0000269" key="3">
    <source>
    </source>
</evidence>
<evidence type="ECO:0000269" key="4">
    <source>
    </source>
</evidence>
<evidence type="ECO:0000305" key="5"/>
<evidence type="ECO:0000305" key="6">
    <source>
    </source>
</evidence>
<feature type="chain" id="PRO_0000394991" description="Cation/H(+) antiporter 21">
    <location>
        <begin position="1"/>
        <end position="832"/>
    </location>
</feature>
<feature type="transmembrane region" description="Helical" evidence="1">
    <location>
        <begin position="33"/>
        <end position="55"/>
    </location>
</feature>
<feature type="transmembrane region" description="Helical" evidence="1">
    <location>
        <begin position="61"/>
        <end position="81"/>
    </location>
</feature>
<feature type="transmembrane region" description="Helical" evidence="1">
    <location>
        <begin position="99"/>
        <end position="119"/>
    </location>
</feature>
<feature type="transmembrane region" description="Helical" evidence="1">
    <location>
        <begin position="132"/>
        <end position="152"/>
    </location>
</feature>
<feature type="transmembrane region" description="Helical" evidence="1">
    <location>
        <begin position="161"/>
        <end position="181"/>
    </location>
</feature>
<feature type="transmembrane region" description="Helical" evidence="1">
    <location>
        <begin position="200"/>
        <end position="220"/>
    </location>
</feature>
<feature type="transmembrane region" description="Helical" evidence="1">
    <location>
        <begin position="236"/>
        <end position="256"/>
    </location>
</feature>
<feature type="transmembrane region" description="Helical" evidence="1">
    <location>
        <begin position="278"/>
        <end position="298"/>
    </location>
</feature>
<feature type="transmembrane region" description="Helical" evidence="1">
    <location>
        <begin position="319"/>
        <end position="339"/>
    </location>
</feature>
<feature type="transmembrane region" description="Helical" evidence="1">
    <location>
        <begin position="352"/>
        <end position="372"/>
    </location>
</feature>
<feature type="transmembrane region" description="Helical" evidence="1">
    <location>
        <begin position="379"/>
        <end position="399"/>
    </location>
</feature>
<feature type="transmembrane region" description="Helical" evidence="1">
    <location>
        <begin position="413"/>
        <end position="433"/>
    </location>
</feature>
<feature type="region of interest" description="Disordered" evidence="2">
    <location>
        <begin position="792"/>
        <end position="832"/>
    </location>
</feature>
<feature type="compositionally biased region" description="Polar residues" evidence="2">
    <location>
        <begin position="792"/>
        <end position="802"/>
    </location>
</feature>